<proteinExistence type="inferred from homology"/>
<accession>P43809</accession>
<reference key="1">
    <citation type="journal article" date="1995" name="Science">
        <title>Whole-genome random sequencing and assembly of Haemophilus influenzae Rd.</title>
        <authorList>
            <person name="Fleischmann R.D."/>
            <person name="Adams M.D."/>
            <person name="White O."/>
            <person name="Clayton R.A."/>
            <person name="Kirkness E.F."/>
            <person name="Kerlavage A.R."/>
            <person name="Bult C.J."/>
            <person name="Tomb J.-F."/>
            <person name="Dougherty B.A."/>
            <person name="Merrick J.M."/>
            <person name="McKenney K."/>
            <person name="Sutton G.G."/>
            <person name="FitzHugh W."/>
            <person name="Fields C.A."/>
            <person name="Gocayne J.D."/>
            <person name="Scott J.D."/>
            <person name="Shirley R."/>
            <person name="Liu L.-I."/>
            <person name="Glodek A."/>
            <person name="Kelley J.M."/>
            <person name="Weidman J.F."/>
            <person name="Phillips C.A."/>
            <person name="Spriggs T."/>
            <person name="Hedblom E."/>
            <person name="Cotton M.D."/>
            <person name="Utterback T.R."/>
            <person name="Hanna M.C."/>
            <person name="Nguyen D.T."/>
            <person name="Saudek D.M."/>
            <person name="Brandon R.C."/>
            <person name="Fine L.D."/>
            <person name="Fritchman J.L."/>
            <person name="Fuhrmann J.L."/>
            <person name="Geoghagen N.S.M."/>
            <person name="Gnehm C.L."/>
            <person name="McDonald L.A."/>
            <person name="Small K.V."/>
            <person name="Fraser C.M."/>
            <person name="Smith H.O."/>
            <person name="Venter J.C."/>
        </authorList>
    </citation>
    <scope>NUCLEOTIDE SEQUENCE [LARGE SCALE GENOMIC DNA]</scope>
    <source>
        <strain>ATCC 51907 / DSM 11121 / KW20 / Rd</strain>
    </source>
</reference>
<reference key="2">
    <citation type="journal article" date="2008" name="Mutat. Res.">
        <title>RecJ, ExoI and RecG are required for genome maintenance but not for generation of genetic diversity by repeat-mediated phase variation in Haemophilus influenzae.</title>
        <authorList>
            <person name="Kumar G.A."/>
            <person name="Woodhall M.R."/>
            <person name="Hood D.W."/>
            <person name="Moxon E.R."/>
            <person name="Bayliss C.D."/>
        </authorList>
    </citation>
    <scope>FUNCTION</scope>
    <scope>DISRUPTION PHENOTYPE</scope>
    <source>
        <strain>ATCC 51907 / DSM 11121 / KW20 / Rd</strain>
    </source>
</reference>
<evidence type="ECO:0000250" key="1">
    <source>
        <dbReference type="UniProtKB" id="P24230"/>
    </source>
</evidence>
<evidence type="ECO:0000250" key="2">
    <source>
        <dbReference type="UniProtKB" id="Q9WY48"/>
    </source>
</evidence>
<evidence type="ECO:0000255" key="3">
    <source>
        <dbReference type="PROSITE-ProRule" id="PRU00541"/>
    </source>
</evidence>
<evidence type="ECO:0000255" key="4">
    <source>
        <dbReference type="PROSITE-ProRule" id="PRU00542"/>
    </source>
</evidence>
<evidence type="ECO:0000269" key="5">
    <source>
    </source>
</evidence>
<evidence type="ECO:0000305" key="6"/>
<protein>
    <recommendedName>
        <fullName>ATP-dependent DNA helicase RecG</fullName>
        <ecNumber evidence="1">5.6.2.4</ecNumber>
    </recommendedName>
    <alternativeName>
        <fullName>DNA branch migration protein RecG</fullName>
    </alternativeName>
    <alternativeName>
        <fullName>Probable DNA 3'-5' helicase RecG</fullName>
    </alternativeName>
</protein>
<organism>
    <name type="scientific">Haemophilus influenzae (strain ATCC 51907 / DSM 11121 / KW20 / Rd)</name>
    <dbReference type="NCBI Taxonomy" id="71421"/>
    <lineage>
        <taxon>Bacteria</taxon>
        <taxon>Pseudomonadati</taxon>
        <taxon>Pseudomonadota</taxon>
        <taxon>Gammaproteobacteria</taxon>
        <taxon>Pasteurellales</taxon>
        <taxon>Pasteurellaceae</taxon>
        <taxon>Haemophilus</taxon>
    </lineage>
</organism>
<name>RECG_HAEIN</name>
<sequence>MSLELLDAVPLTSLSGVGAAISNKLAKIGIHNLQDLLFHLPIRYEDRTRITLIANLRPEQYFTIEGIVQTCEVAFGRRPILSVSLSDGTSKIMLRFFNFNAGMRNSFQVGVRVKAFGEVKRGRHMPEIHHPEYQIVRDNAPIVLEETLTPIYSTTEGLKQNSLRKLTDQALALLDKVQIAEILPNEFNPHQYSLKEALRLLHRPPPDISLEMLEQGKHPAQQRLIFEELLAHNLAMQKVRLGTQQFSALPLHYQTDLKQRFLATLPFQPTNAQKRVVSDIEQDLIKDYPMMRLVQGDVGSGKTLVAALAALTAIDNGKQVALMAPTEILAEQHANNFRRWFKPFGIEVGWLAGKVKGKSRQAELEKIKTGAVQMVVGTHALFQEEVEFSDLALVIIDEQHRFGVHQRLMLREKGEKAGFYPHQLIMTATPIPRTLAMTVYADLDTSIIDELPPGRTPITTVVVSEERRAEIVMRVKNACVNEKRQAYWVCTLIDESEVLEAQAAEAIWEDLTKALPMLNIGLVHGRMKPQEKQDVMMRFKNAELDLLVATTVIEVGVDVPNASLMIIENAERLGLSQLHQLRGRVGRGCTASFCVLMYKPPLGKVSQKRLQVLRDSQDGFVISEKDLEIRGPGEVLGTKQTGIAELRVANLMRDRKMIPTVQHYAKSLIQKYPDVAESLIRRWLNNKEIYSNA</sequence>
<feature type="chain" id="PRO_0000102142" description="ATP-dependent DNA helicase RecG">
    <location>
        <begin position="1"/>
        <end position="693"/>
    </location>
</feature>
<feature type="domain" description="Helicase ATP-binding" evidence="3">
    <location>
        <begin position="283"/>
        <end position="448"/>
    </location>
</feature>
<feature type="domain" description="Helicase C-terminal" evidence="4">
    <location>
        <begin position="482"/>
        <end position="628"/>
    </location>
</feature>
<feature type="short sequence motif" description="DEAH box" evidence="3">
    <location>
        <begin position="397"/>
        <end position="400"/>
    </location>
</feature>
<feature type="binding site" evidence="3">
    <location>
        <begin position="296"/>
        <end position="303"/>
    </location>
    <ligand>
        <name>ATP</name>
        <dbReference type="ChEBI" id="CHEBI:30616"/>
    </ligand>
</feature>
<gene>
    <name type="primary">recG</name>
    <name type="ordered locus">HI_1740</name>
</gene>
<dbReference type="EC" id="5.6.2.4" evidence="1"/>
<dbReference type="EMBL" id="L42023">
    <property type="protein sequence ID" value="AAC23387.1"/>
    <property type="molecule type" value="Genomic_DNA"/>
</dbReference>
<dbReference type="PIR" id="E64139">
    <property type="entry name" value="E64139"/>
</dbReference>
<dbReference type="RefSeq" id="NP_439884.1">
    <property type="nucleotide sequence ID" value="NC_000907.1"/>
</dbReference>
<dbReference type="SMR" id="P43809"/>
<dbReference type="STRING" id="71421.HI_1740"/>
<dbReference type="EnsemblBacteria" id="AAC23387">
    <property type="protein sequence ID" value="AAC23387"/>
    <property type="gene ID" value="HI_1740"/>
</dbReference>
<dbReference type="KEGG" id="hin:HI_1740"/>
<dbReference type="PATRIC" id="fig|71421.8.peg.1823"/>
<dbReference type="eggNOG" id="COG1200">
    <property type="taxonomic scope" value="Bacteria"/>
</dbReference>
<dbReference type="HOGENOM" id="CLU_005122_7_1_6"/>
<dbReference type="OrthoDB" id="9804325at2"/>
<dbReference type="PhylomeDB" id="P43809"/>
<dbReference type="BioCyc" id="HINF71421:G1GJ1-1763-MONOMER"/>
<dbReference type="Proteomes" id="UP000000579">
    <property type="component" value="Chromosome"/>
</dbReference>
<dbReference type="GO" id="GO:0005524">
    <property type="term" value="F:ATP binding"/>
    <property type="evidence" value="ECO:0007669"/>
    <property type="project" value="UniProtKB-KW"/>
</dbReference>
<dbReference type="GO" id="GO:0016887">
    <property type="term" value="F:ATP hydrolysis activity"/>
    <property type="evidence" value="ECO:0007669"/>
    <property type="project" value="RHEA"/>
</dbReference>
<dbReference type="GO" id="GO:0003677">
    <property type="term" value="F:DNA binding"/>
    <property type="evidence" value="ECO:0007669"/>
    <property type="project" value="UniProtKB-KW"/>
</dbReference>
<dbReference type="GO" id="GO:0003678">
    <property type="term" value="F:DNA helicase activity"/>
    <property type="evidence" value="ECO:0000318"/>
    <property type="project" value="GO_Central"/>
</dbReference>
<dbReference type="GO" id="GO:0006310">
    <property type="term" value="P:DNA recombination"/>
    <property type="evidence" value="ECO:0007669"/>
    <property type="project" value="UniProtKB-KW"/>
</dbReference>
<dbReference type="GO" id="GO:0006281">
    <property type="term" value="P:DNA repair"/>
    <property type="evidence" value="ECO:0000318"/>
    <property type="project" value="GO_Central"/>
</dbReference>
<dbReference type="CDD" id="cd17992">
    <property type="entry name" value="DEXHc_RecG"/>
    <property type="match status" value="1"/>
</dbReference>
<dbReference type="CDD" id="cd04488">
    <property type="entry name" value="RecG_wedge_OBF"/>
    <property type="match status" value="1"/>
</dbReference>
<dbReference type="FunFam" id="2.40.50.140:FF:000134">
    <property type="entry name" value="ATP-dependent DNA helicase RecG"/>
    <property type="match status" value="1"/>
</dbReference>
<dbReference type="FunFam" id="3.40.50.300:FF:000391">
    <property type="entry name" value="ATP-dependent DNA helicase RecG"/>
    <property type="match status" value="1"/>
</dbReference>
<dbReference type="FunFam" id="3.40.50.300:FF:000715">
    <property type="entry name" value="ATP-dependent DNA helicase RecG"/>
    <property type="match status" value="1"/>
</dbReference>
<dbReference type="Gene3D" id="2.40.50.140">
    <property type="entry name" value="Nucleic acid-binding proteins"/>
    <property type="match status" value="1"/>
</dbReference>
<dbReference type="Gene3D" id="3.40.50.300">
    <property type="entry name" value="P-loop containing nucleotide triphosphate hydrolases"/>
    <property type="match status" value="2"/>
</dbReference>
<dbReference type="InterPro" id="IPR004609">
    <property type="entry name" value="ATP-dep_DNA_helicase_RecG"/>
</dbReference>
<dbReference type="InterPro" id="IPR011545">
    <property type="entry name" value="DEAD/DEAH_box_helicase_dom"/>
</dbReference>
<dbReference type="InterPro" id="IPR014001">
    <property type="entry name" value="Helicase_ATP-bd"/>
</dbReference>
<dbReference type="InterPro" id="IPR001650">
    <property type="entry name" value="Helicase_C-like"/>
</dbReference>
<dbReference type="InterPro" id="IPR012340">
    <property type="entry name" value="NA-bd_OB-fold"/>
</dbReference>
<dbReference type="InterPro" id="IPR027417">
    <property type="entry name" value="P-loop_NTPase"/>
</dbReference>
<dbReference type="InterPro" id="IPR047112">
    <property type="entry name" value="RecG/Mfd"/>
</dbReference>
<dbReference type="InterPro" id="IPR045562">
    <property type="entry name" value="RecG_dom3_C"/>
</dbReference>
<dbReference type="InterPro" id="IPR033454">
    <property type="entry name" value="RecG_wedge"/>
</dbReference>
<dbReference type="NCBIfam" id="NF008163">
    <property type="entry name" value="PRK10917.1-1"/>
    <property type="match status" value="1"/>
</dbReference>
<dbReference type="NCBIfam" id="NF008165">
    <property type="entry name" value="PRK10917.1-3"/>
    <property type="match status" value="1"/>
</dbReference>
<dbReference type="NCBIfam" id="NF008166">
    <property type="entry name" value="PRK10917.1-4"/>
    <property type="match status" value="1"/>
</dbReference>
<dbReference type="NCBIfam" id="NF008168">
    <property type="entry name" value="PRK10917.2-2"/>
    <property type="match status" value="1"/>
</dbReference>
<dbReference type="NCBIfam" id="TIGR00643">
    <property type="entry name" value="recG"/>
    <property type="match status" value="1"/>
</dbReference>
<dbReference type="PANTHER" id="PTHR47964">
    <property type="entry name" value="ATP-DEPENDENT DNA HELICASE HOMOLOG RECG, CHLOROPLASTIC"/>
    <property type="match status" value="1"/>
</dbReference>
<dbReference type="PANTHER" id="PTHR47964:SF1">
    <property type="entry name" value="ATP-DEPENDENT DNA HELICASE HOMOLOG RECG, CHLOROPLASTIC"/>
    <property type="match status" value="1"/>
</dbReference>
<dbReference type="Pfam" id="PF00270">
    <property type="entry name" value="DEAD"/>
    <property type="match status" value="1"/>
</dbReference>
<dbReference type="Pfam" id="PF00271">
    <property type="entry name" value="Helicase_C"/>
    <property type="match status" value="1"/>
</dbReference>
<dbReference type="Pfam" id="PF19833">
    <property type="entry name" value="RecG_dom3_C"/>
    <property type="match status" value="1"/>
</dbReference>
<dbReference type="Pfam" id="PF17191">
    <property type="entry name" value="RecG_wedge"/>
    <property type="match status" value="1"/>
</dbReference>
<dbReference type="SMART" id="SM00487">
    <property type="entry name" value="DEXDc"/>
    <property type="match status" value="1"/>
</dbReference>
<dbReference type="SMART" id="SM00490">
    <property type="entry name" value="HELICc"/>
    <property type="match status" value="1"/>
</dbReference>
<dbReference type="SUPFAM" id="SSF50249">
    <property type="entry name" value="Nucleic acid-binding proteins"/>
    <property type="match status" value="1"/>
</dbReference>
<dbReference type="SUPFAM" id="SSF52540">
    <property type="entry name" value="P-loop containing nucleoside triphosphate hydrolases"/>
    <property type="match status" value="2"/>
</dbReference>
<dbReference type="PROSITE" id="PS51192">
    <property type="entry name" value="HELICASE_ATP_BIND_1"/>
    <property type="match status" value="1"/>
</dbReference>
<dbReference type="PROSITE" id="PS51194">
    <property type="entry name" value="HELICASE_CTER"/>
    <property type="match status" value="1"/>
</dbReference>
<keyword id="KW-0067">ATP-binding</keyword>
<keyword id="KW-0227">DNA damage</keyword>
<keyword id="KW-0233">DNA recombination</keyword>
<keyword id="KW-0234">DNA repair</keyword>
<keyword id="KW-0238">DNA-binding</keyword>
<keyword id="KW-0347">Helicase</keyword>
<keyword id="KW-0378">Hydrolase</keyword>
<keyword id="KW-0413">Isomerase</keyword>
<keyword id="KW-0547">Nucleotide-binding</keyword>
<keyword id="KW-1185">Reference proteome</keyword>
<comment type="function">
    <text evidence="1 5">Plays a critical role in recombination and DNA repair. Helps process Holliday junction intermediates to mature products by catalyzing branch migration. Has replication fork regression activity, unwinds stalled or blocked replication forks to make a HJ that can be resolved. Has a DNA unwinding activity characteristic of a DNA helicase with 3'-5' polarity (By similarity). Involved in genome maintenance but probably not in phase variation, which contributes to virulence and disease (PubMed:18242643).</text>
</comment>
<comment type="catalytic activity">
    <reaction evidence="1">
        <text>Couples ATP hydrolysis with the unwinding of duplex DNA by translocating in the 3'-5' direction.</text>
        <dbReference type="EC" id="5.6.2.4"/>
    </reaction>
</comment>
<comment type="catalytic activity">
    <reaction evidence="1">
        <text>ATP + H2O = ADP + phosphate + H(+)</text>
        <dbReference type="Rhea" id="RHEA:13065"/>
        <dbReference type="ChEBI" id="CHEBI:15377"/>
        <dbReference type="ChEBI" id="CHEBI:15378"/>
        <dbReference type="ChEBI" id="CHEBI:30616"/>
        <dbReference type="ChEBI" id="CHEBI:43474"/>
        <dbReference type="ChEBI" id="CHEBI:456216"/>
        <dbReference type="EC" id="5.6.2.4"/>
    </reaction>
</comment>
<comment type="subunit">
    <text evidence="2">Monomer (By similarity).</text>
</comment>
<comment type="domain">
    <text evidence="2">The wedge domain within the N-terminus inserts into the replication fork junction, where the lagging and leading strand split (By similarity).</text>
</comment>
<comment type="disruption phenotype">
    <text evidence="5">Greatly decreased growth rate with many dead clumped cells in rich media, higher sensitivity to UV light, no change in the spontaneous mutation rate, no change in the rates of slippage in tetranucleotide repeat tracts (i.e. phase variation) (PubMed:18242643).</text>
</comment>
<comment type="similarity">
    <text evidence="6">Belongs to the helicase family. RecG subfamily.</text>
</comment>